<comment type="function">
    <text evidence="1">Catalyzes the NAD(+)-dependent oxidation of L-threonine to 2-amino-3-ketobutyrate.</text>
</comment>
<comment type="catalytic activity">
    <reaction evidence="1">
        <text>L-threonine + NAD(+) = (2S)-2-amino-3-oxobutanoate + NADH + H(+)</text>
        <dbReference type="Rhea" id="RHEA:13161"/>
        <dbReference type="ChEBI" id="CHEBI:15378"/>
        <dbReference type="ChEBI" id="CHEBI:57540"/>
        <dbReference type="ChEBI" id="CHEBI:57926"/>
        <dbReference type="ChEBI" id="CHEBI:57945"/>
        <dbReference type="ChEBI" id="CHEBI:78948"/>
        <dbReference type="EC" id="1.1.1.103"/>
    </reaction>
</comment>
<comment type="cofactor">
    <cofactor evidence="1">
        <name>Zn(2+)</name>
        <dbReference type="ChEBI" id="CHEBI:29105"/>
    </cofactor>
    <text evidence="1">Binds 2 Zn(2+) ions per subunit.</text>
</comment>
<comment type="pathway">
    <text evidence="1">Amino-acid degradation; L-threonine degradation via oxydo-reductase pathway; glycine from L-threonine: step 1/2.</text>
</comment>
<comment type="subunit">
    <text evidence="1">Homotetramer.</text>
</comment>
<comment type="subcellular location">
    <subcellularLocation>
        <location evidence="1">Cytoplasm</location>
    </subcellularLocation>
</comment>
<comment type="similarity">
    <text evidence="1">Belongs to the zinc-containing alcohol dehydrogenase family.</text>
</comment>
<evidence type="ECO:0000255" key="1">
    <source>
        <dbReference type="HAMAP-Rule" id="MF_00627"/>
    </source>
</evidence>
<gene>
    <name evidence="1" type="primary">tdh</name>
    <name type="ordered locus">PSHAa2315</name>
</gene>
<dbReference type="EC" id="1.1.1.103" evidence="1"/>
<dbReference type="EMBL" id="CR954246">
    <property type="protein sequence ID" value="CAI87371.1"/>
    <property type="molecule type" value="Genomic_DNA"/>
</dbReference>
<dbReference type="SMR" id="Q3IHW0"/>
<dbReference type="STRING" id="326442.PSHAa2315"/>
<dbReference type="KEGG" id="pha:PSHAa2315"/>
<dbReference type="PATRIC" id="fig|326442.8.peg.2236"/>
<dbReference type="eggNOG" id="COG1063">
    <property type="taxonomic scope" value="Bacteria"/>
</dbReference>
<dbReference type="HOGENOM" id="CLU_026673_11_0_6"/>
<dbReference type="BioCyc" id="PHAL326442:PSHA_RS11420-MONOMER"/>
<dbReference type="UniPathway" id="UPA00046">
    <property type="reaction ID" value="UER00505"/>
</dbReference>
<dbReference type="Proteomes" id="UP000006843">
    <property type="component" value="Chromosome I"/>
</dbReference>
<dbReference type="GO" id="GO:0005737">
    <property type="term" value="C:cytoplasm"/>
    <property type="evidence" value="ECO:0007669"/>
    <property type="project" value="UniProtKB-SubCell"/>
</dbReference>
<dbReference type="GO" id="GO:0008743">
    <property type="term" value="F:L-threonine 3-dehydrogenase activity"/>
    <property type="evidence" value="ECO:0007669"/>
    <property type="project" value="UniProtKB-UniRule"/>
</dbReference>
<dbReference type="GO" id="GO:0008270">
    <property type="term" value="F:zinc ion binding"/>
    <property type="evidence" value="ECO:0007669"/>
    <property type="project" value="UniProtKB-UniRule"/>
</dbReference>
<dbReference type="GO" id="GO:0019518">
    <property type="term" value="P:L-threonine catabolic process to glycine"/>
    <property type="evidence" value="ECO:0007669"/>
    <property type="project" value="UniProtKB-UniPathway"/>
</dbReference>
<dbReference type="Gene3D" id="3.90.180.10">
    <property type="entry name" value="Medium-chain alcohol dehydrogenases, catalytic domain"/>
    <property type="match status" value="1"/>
</dbReference>
<dbReference type="Gene3D" id="3.40.50.720">
    <property type="entry name" value="NAD(P)-binding Rossmann-like Domain"/>
    <property type="match status" value="1"/>
</dbReference>
<dbReference type="HAMAP" id="MF_00627">
    <property type="entry name" value="Thr_dehydrog"/>
    <property type="match status" value="1"/>
</dbReference>
<dbReference type="InterPro" id="IPR013149">
    <property type="entry name" value="ADH-like_C"/>
</dbReference>
<dbReference type="InterPro" id="IPR013154">
    <property type="entry name" value="ADH-like_N"/>
</dbReference>
<dbReference type="InterPro" id="IPR002328">
    <property type="entry name" value="ADH_Zn_CS"/>
</dbReference>
<dbReference type="InterPro" id="IPR011032">
    <property type="entry name" value="GroES-like_sf"/>
</dbReference>
<dbReference type="InterPro" id="IPR004627">
    <property type="entry name" value="L-Threonine_3-DHase"/>
</dbReference>
<dbReference type="InterPro" id="IPR036291">
    <property type="entry name" value="NAD(P)-bd_dom_sf"/>
</dbReference>
<dbReference type="InterPro" id="IPR020843">
    <property type="entry name" value="PKS_ER"/>
</dbReference>
<dbReference type="InterPro" id="IPR050129">
    <property type="entry name" value="Zn_alcohol_dh"/>
</dbReference>
<dbReference type="NCBIfam" id="NF003808">
    <property type="entry name" value="PRK05396.1"/>
    <property type="match status" value="1"/>
</dbReference>
<dbReference type="NCBIfam" id="TIGR00692">
    <property type="entry name" value="tdh"/>
    <property type="match status" value="1"/>
</dbReference>
<dbReference type="PANTHER" id="PTHR43401">
    <property type="entry name" value="L-THREONINE 3-DEHYDROGENASE"/>
    <property type="match status" value="1"/>
</dbReference>
<dbReference type="PANTHER" id="PTHR43401:SF2">
    <property type="entry name" value="L-THREONINE 3-DEHYDROGENASE"/>
    <property type="match status" value="1"/>
</dbReference>
<dbReference type="Pfam" id="PF08240">
    <property type="entry name" value="ADH_N"/>
    <property type="match status" value="1"/>
</dbReference>
<dbReference type="Pfam" id="PF00107">
    <property type="entry name" value="ADH_zinc_N"/>
    <property type="match status" value="1"/>
</dbReference>
<dbReference type="SMART" id="SM00829">
    <property type="entry name" value="PKS_ER"/>
    <property type="match status" value="1"/>
</dbReference>
<dbReference type="SUPFAM" id="SSF50129">
    <property type="entry name" value="GroES-like"/>
    <property type="match status" value="1"/>
</dbReference>
<dbReference type="SUPFAM" id="SSF51735">
    <property type="entry name" value="NAD(P)-binding Rossmann-fold domains"/>
    <property type="match status" value="1"/>
</dbReference>
<dbReference type="PROSITE" id="PS00059">
    <property type="entry name" value="ADH_ZINC"/>
    <property type="match status" value="1"/>
</dbReference>
<protein>
    <recommendedName>
        <fullName evidence="1">L-threonine 3-dehydrogenase</fullName>
        <shortName evidence="1">TDH</shortName>
        <ecNumber evidence="1">1.1.1.103</ecNumber>
    </recommendedName>
</protein>
<sequence length="341" mass="37262">MKALSKLKAEPGIWMTDAPKPEVGHNDLLIKIRKTAICGTDVHIYKWDEWAQKTIPTPMVVGHEYVGEVVDMGQEVRGFKVGDRVSGEGHITCGHCRNCRAGRVHLCRNTTGVGVNREGAFAEYLVIPAFNAFKIPDNISDELASIFDPFGNAVHTALSFDLVGEDVLITGAGPIGIMAAAVAKHVGARHVVISDVNEYRLELARKMGATRAVNVANEKLEDVIKELGMTEGFDIGLEMSGVPSAFNSMLNNMNHGGKVAMLGIPPSDMAVDWNQVIFKGLVIKGIYGREMFETWYKMASLIQSGLDLNPIITHQYSIDDFQAGFDMMISGQSGKVILNWD</sequence>
<keyword id="KW-0963">Cytoplasm</keyword>
<keyword id="KW-0479">Metal-binding</keyword>
<keyword id="KW-0520">NAD</keyword>
<keyword id="KW-0560">Oxidoreductase</keyword>
<keyword id="KW-1185">Reference proteome</keyword>
<keyword id="KW-0862">Zinc</keyword>
<proteinExistence type="inferred from homology"/>
<accession>Q3IHW0</accession>
<feature type="chain" id="PRO_1000051646" description="L-threonine 3-dehydrogenase">
    <location>
        <begin position="1"/>
        <end position="341"/>
    </location>
</feature>
<feature type="active site" description="Charge relay system" evidence="1">
    <location>
        <position position="40"/>
    </location>
</feature>
<feature type="active site" description="Charge relay system" evidence="1">
    <location>
        <position position="43"/>
    </location>
</feature>
<feature type="binding site" evidence="1">
    <location>
        <position position="38"/>
    </location>
    <ligand>
        <name>Zn(2+)</name>
        <dbReference type="ChEBI" id="CHEBI:29105"/>
        <label>1</label>
        <note>catalytic</note>
    </ligand>
</feature>
<feature type="binding site" evidence="1">
    <location>
        <position position="63"/>
    </location>
    <ligand>
        <name>Zn(2+)</name>
        <dbReference type="ChEBI" id="CHEBI:29105"/>
        <label>1</label>
        <note>catalytic</note>
    </ligand>
</feature>
<feature type="binding site" evidence="1">
    <location>
        <position position="64"/>
    </location>
    <ligand>
        <name>Zn(2+)</name>
        <dbReference type="ChEBI" id="CHEBI:29105"/>
        <label>1</label>
        <note>catalytic</note>
    </ligand>
</feature>
<feature type="binding site" evidence="1">
    <location>
        <position position="93"/>
    </location>
    <ligand>
        <name>Zn(2+)</name>
        <dbReference type="ChEBI" id="CHEBI:29105"/>
        <label>2</label>
    </ligand>
</feature>
<feature type="binding site" evidence="1">
    <location>
        <position position="96"/>
    </location>
    <ligand>
        <name>Zn(2+)</name>
        <dbReference type="ChEBI" id="CHEBI:29105"/>
        <label>2</label>
    </ligand>
</feature>
<feature type="binding site" evidence="1">
    <location>
        <position position="99"/>
    </location>
    <ligand>
        <name>Zn(2+)</name>
        <dbReference type="ChEBI" id="CHEBI:29105"/>
        <label>2</label>
    </ligand>
</feature>
<feature type="binding site" evidence="1">
    <location>
        <position position="107"/>
    </location>
    <ligand>
        <name>Zn(2+)</name>
        <dbReference type="ChEBI" id="CHEBI:29105"/>
        <label>2</label>
    </ligand>
</feature>
<feature type="binding site" evidence="1">
    <location>
        <position position="175"/>
    </location>
    <ligand>
        <name>NAD(+)</name>
        <dbReference type="ChEBI" id="CHEBI:57540"/>
    </ligand>
</feature>
<feature type="binding site" evidence="1">
    <location>
        <position position="195"/>
    </location>
    <ligand>
        <name>NAD(+)</name>
        <dbReference type="ChEBI" id="CHEBI:57540"/>
    </ligand>
</feature>
<feature type="binding site" evidence="1">
    <location>
        <position position="200"/>
    </location>
    <ligand>
        <name>NAD(+)</name>
        <dbReference type="ChEBI" id="CHEBI:57540"/>
    </ligand>
</feature>
<feature type="binding site" evidence="1">
    <location>
        <begin position="262"/>
        <end position="264"/>
    </location>
    <ligand>
        <name>NAD(+)</name>
        <dbReference type="ChEBI" id="CHEBI:57540"/>
    </ligand>
</feature>
<feature type="binding site" evidence="1">
    <location>
        <begin position="286"/>
        <end position="287"/>
    </location>
    <ligand>
        <name>NAD(+)</name>
        <dbReference type="ChEBI" id="CHEBI:57540"/>
    </ligand>
</feature>
<feature type="site" description="Important for catalytic activity for the proton relay mechanism but does not participate directly in the coordination of zinc atom" evidence="1">
    <location>
        <position position="148"/>
    </location>
</feature>
<name>TDH_PSET1</name>
<organism>
    <name type="scientific">Pseudoalteromonas translucida (strain TAC 125)</name>
    <dbReference type="NCBI Taxonomy" id="326442"/>
    <lineage>
        <taxon>Bacteria</taxon>
        <taxon>Pseudomonadati</taxon>
        <taxon>Pseudomonadota</taxon>
        <taxon>Gammaproteobacteria</taxon>
        <taxon>Alteromonadales</taxon>
        <taxon>Pseudoalteromonadaceae</taxon>
        <taxon>Pseudoalteromonas</taxon>
    </lineage>
</organism>
<reference key="1">
    <citation type="journal article" date="2005" name="Genome Res.">
        <title>Coping with cold: the genome of the versatile marine Antarctica bacterium Pseudoalteromonas haloplanktis TAC125.</title>
        <authorList>
            <person name="Medigue C."/>
            <person name="Krin E."/>
            <person name="Pascal G."/>
            <person name="Barbe V."/>
            <person name="Bernsel A."/>
            <person name="Bertin P.N."/>
            <person name="Cheung F."/>
            <person name="Cruveiller S."/>
            <person name="D'Amico S."/>
            <person name="Duilio A."/>
            <person name="Fang G."/>
            <person name="Feller G."/>
            <person name="Ho C."/>
            <person name="Mangenot S."/>
            <person name="Marino G."/>
            <person name="Nilsson J."/>
            <person name="Parrilli E."/>
            <person name="Rocha E.P.C."/>
            <person name="Rouy Z."/>
            <person name="Sekowska A."/>
            <person name="Tutino M.L."/>
            <person name="Vallenet D."/>
            <person name="von Heijne G."/>
            <person name="Danchin A."/>
        </authorList>
    </citation>
    <scope>NUCLEOTIDE SEQUENCE [LARGE SCALE GENOMIC DNA]</scope>
    <source>
        <strain>TAC 125</strain>
    </source>
</reference>